<reference key="1">
    <citation type="submission" date="2005-12" db="EMBL/GenBank/DDBJ databases">
        <title>The NIAID influenza genome sequencing project.</title>
        <authorList>
            <person name="Ghedin E."/>
            <person name="Spiro D."/>
            <person name="Miller N."/>
            <person name="Zaborsky J."/>
            <person name="Feldblyum T."/>
            <person name="Subbu V."/>
            <person name="Shumway M."/>
            <person name="Sparenborg J."/>
            <person name="Groveman L."/>
            <person name="Halpin R."/>
            <person name="Sitz J."/>
            <person name="Koo H."/>
            <person name="Salzberg S.L."/>
            <person name="Webster R.G."/>
            <person name="Hoffmann E."/>
            <person name="Krauss S."/>
            <person name="Naeve C."/>
            <person name="Bao Y."/>
            <person name="Bolotov P."/>
            <person name="Dernovoy D."/>
            <person name="Kiryutin B."/>
            <person name="Lipman D.J."/>
            <person name="Tatusova T."/>
        </authorList>
    </citation>
    <scope>NUCLEOTIDE SEQUENCE [GENOMIC RNA]</scope>
</reference>
<accession>Q2VNC5</accession>
<evidence type="ECO:0000255" key="1">
    <source>
        <dbReference type="HAMAP-Rule" id="MF_04065"/>
    </source>
</evidence>
<evidence type="ECO:0000256" key="2">
    <source>
        <dbReference type="SAM" id="MobiDB-lite"/>
    </source>
</evidence>
<proteinExistence type="evidence at protein level"/>
<organism>
    <name type="scientific">Influenza A virus (strain A/Memphis/18/1978 H3N2)</name>
    <dbReference type="NCBI Taxonomy" id="383579"/>
    <lineage>
        <taxon>Viruses</taxon>
        <taxon>Riboviria</taxon>
        <taxon>Orthornavirae</taxon>
        <taxon>Negarnaviricota</taxon>
        <taxon>Polyploviricotina</taxon>
        <taxon>Insthoviricetes</taxon>
        <taxon>Articulavirales</taxon>
        <taxon>Orthomyxoviridae</taxon>
        <taxon>Alphainfluenzavirus</taxon>
        <taxon>Alphainfluenzavirus influenzae</taxon>
        <taxon>Influenza A virus</taxon>
    </lineage>
</organism>
<sequence length="758" mass="86607">MDVNPTLLFLKIPAQNAISTTFPYTGDPPYSHGTGTGYTMDTVNRTHQYSEKGKWTTNTETGAPQLNPIDGPLPEDNEPSGYAQTDCVLEAMAFLEESHPGIFENSCLETMEVVQQTRVDRLTQGRQTYDWTLNRNQPAATALANTIEVFRSNGLTANESGRLIDFLKDVMESMDKEEIEITTHFQRKRRVRDNMTKKMVTQRTIGKKKQRVNKRSYLIRALTLNTMTKDAERGKLKRRAIATPGMQIRGFVYFVETLARSICEKLEQSGLPVGGNEKKAKLANVVRKMMTNSQDTELSFTITGDNTKWNENQNPRMFLAMITYITKNQPEWFRNILSIAPIMFSNKMARLGKGYMFESKRMKLRTQIPAEMLASIDLKYFNESTRKKIEKIRPLLIDGTASLSPGMMMGMFNMLSTVLGVSILNLGQKKYTKTTYWWDGLQSSDDFALIVNAPNHEGIQAGVDRFYRTCKLVGINMSKKKSYINRTGTFEFTSFFYRYGFVANFSMELPSFGVSGINESADMSIGVTVIKNNMINNDLGPATAQMALQLFIKDYRYTYRCHRGDTQIQTRRSFELKKLWEQTRSKAGLLVSDGGPNLYNIRNLHIPEVCLKWELMDEDYQGRLCNPLNPFVSHKEIESVNNAVVMPAHGPAKSMEYDAVATTHSWIPKRNRSILNTSQRGILEDEQMYQKCCNLFEKFFPSSSYRRPVGISSMVEAMVSRARIDARIDFESGRIKKEEFSEIMKICSTIEELRRQKQ</sequence>
<organismHost>
    <name type="scientific">Aves</name>
    <dbReference type="NCBI Taxonomy" id="8782"/>
</organismHost>
<organismHost>
    <name type="scientific">Cetacea</name>
    <name type="common">whales</name>
    <dbReference type="NCBI Taxonomy" id="9721"/>
</organismHost>
<organismHost>
    <name type="scientific">Homo sapiens</name>
    <name type="common">Human</name>
    <dbReference type="NCBI Taxonomy" id="9606"/>
</organismHost>
<organismHost>
    <name type="scientific">Phocidae</name>
    <name type="common">true seals</name>
    <dbReference type="NCBI Taxonomy" id="9709"/>
</organismHost>
<organismHost>
    <name type="scientific">Sus scrofa</name>
    <name type="common">Pig</name>
    <dbReference type="NCBI Taxonomy" id="9823"/>
</organismHost>
<name>RDRP_I78A8</name>
<dbReference type="EC" id="2.7.7.48" evidence="1"/>
<dbReference type="EMBL" id="CY006713">
    <property type="protein sequence ID" value="ABB96349.1"/>
    <property type="molecule type" value="Genomic_RNA"/>
</dbReference>
<dbReference type="PDB" id="8RNH">
    <property type="method" value="X-ray"/>
    <property type="resolution" value="1.60 A"/>
    <property type="chains" value="C=177-185"/>
</dbReference>
<dbReference type="PDBsum" id="8RNH"/>
<dbReference type="SMR" id="Q2VNC5"/>
<dbReference type="Proteomes" id="UP000008574">
    <property type="component" value="Genome"/>
</dbReference>
<dbReference type="GO" id="GO:0030430">
    <property type="term" value="C:host cell cytoplasm"/>
    <property type="evidence" value="ECO:0007669"/>
    <property type="project" value="UniProtKB-SubCell"/>
</dbReference>
<dbReference type="GO" id="GO:0042025">
    <property type="term" value="C:host cell nucleus"/>
    <property type="evidence" value="ECO:0007669"/>
    <property type="project" value="UniProtKB-SubCell"/>
</dbReference>
<dbReference type="GO" id="GO:0000166">
    <property type="term" value="F:nucleotide binding"/>
    <property type="evidence" value="ECO:0007669"/>
    <property type="project" value="UniProtKB-UniRule"/>
</dbReference>
<dbReference type="GO" id="GO:0003723">
    <property type="term" value="F:RNA binding"/>
    <property type="evidence" value="ECO:0007669"/>
    <property type="project" value="InterPro"/>
</dbReference>
<dbReference type="GO" id="GO:0003968">
    <property type="term" value="F:RNA-directed RNA polymerase activity"/>
    <property type="evidence" value="ECO:0007669"/>
    <property type="project" value="UniProtKB-UniRule"/>
</dbReference>
<dbReference type="GO" id="GO:0006351">
    <property type="term" value="P:DNA-templated transcription"/>
    <property type="evidence" value="ECO:0007669"/>
    <property type="project" value="UniProtKB-UniRule"/>
</dbReference>
<dbReference type="GO" id="GO:0039657">
    <property type="term" value="P:symbiont-mediated suppression of host gene expression"/>
    <property type="evidence" value="ECO:0007669"/>
    <property type="project" value="UniProtKB-KW"/>
</dbReference>
<dbReference type="GO" id="GO:0039523">
    <property type="term" value="P:symbiont-mediated suppression of host mRNA transcription via inhibition of RNA polymerase II activity"/>
    <property type="evidence" value="ECO:0007669"/>
    <property type="project" value="UniProtKB-UniRule"/>
</dbReference>
<dbReference type="GO" id="GO:0039694">
    <property type="term" value="P:viral RNA genome replication"/>
    <property type="evidence" value="ECO:0007669"/>
    <property type="project" value="UniProtKB-UniRule"/>
</dbReference>
<dbReference type="GO" id="GO:0019083">
    <property type="term" value="P:viral transcription"/>
    <property type="evidence" value="ECO:0007669"/>
    <property type="project" value="UniProtKB-KW"/>
</dbReference>
<dbReference type="Gene3D" id="6.10.140.720">
    <property type="match status" value="1"/>
</dbReference>
<dbReference type="HAMAP" id="MF_04065">
    <property type="entry name" value="INFV_RDRP"/>
    <property type="match status" value="1"/>
</dbReference>
<dbReference type="InterPro" id="IPR007099">
    <property type="entry name" value="RNA-dir_pol_NSvirus"/>
</dbReference>
<dbReference type="InterPro" id="IPR001407">
    <property type="entry name" value="RNA_pol_PB1_influenza"/>
</dbReference>
<dbReference type="Pfam" id="PF00602">
    <property type="entry name" value="Flu_PB1"/>
    <property type="match status" value="1"/>
</dbReference>
<dbReference type="PIRSF" id="PIRSF000827">
    <property type="entry name" value="RdRPol_OMV"/>
    <property type="match status" value="1"/>
</dbReference>
<dbReference type="PROSITE" id="PS50525">
    <property type="entry name" value="RDRP_SSRNA_NEG_SEG"/>
    <property type="match status" value="1"/>
</dbReference>
<feature type="chain" id="PRO_0000279606" description="RNA-directed RNA polymerase catalytic subunit">
    <location>
        <begin position="1"/>
        <end position="758"/>
    </location>
</feature>
<feature type="domain" description="RdRp catalytic" evidence="1">
    <location>
        <begin position="286"/>
        <end position="483"/>
    </location>
</feature>
<feature type="region of interest" description="Disordered" evidence="2">
    <location>
        <begin position="50"/>
        <end position="76"/>
    </location>
</feature>
<feature type="region of interest" description="Promoter-binding site" evidence="1">
    <location>
        <begin position="249"/>
        <end position="256"/>
    </location>
</feature>
<feature type="short sequence motif" description="Nuclear localization signal" evidence="1">
    <location>
        <begin position="187"/>
        <end position="195"/>
    </location>
</feature>
<feature type="short sequence motif" description="Nuclear localization signal" evidence="1">
    <location>
        <begin position="203"/>
        <end position="216"/>
    </location>
</feature>
<feature type="compositionally biased region" description="Polar residues" evidence="2">
    <location>
        <begin position="55"/>
        <end position="64"/>
    </location>
</feature>
<comment type="function">
    <text evidence="1">RNA-dependent RNA polymerase which is responsible for replication and transcription of virus RNA segments. The transcription of viral mRNAs occurs by a unique mechanism called cap-snatching. 5' methylated caps of cellular mRNAs are cleaved after 10-13 nucleotides by PA. In turn, these short capped RNAs are used as primers by PB1 for transcription of viral mRNAs. During virus replication, PB1 initiates RNA synthesis and copy vRNA into complementary RNA (cRNA) which in turn serves as a template for the production of more vRNAs.</text>
</comment>
<comment type="catalytic activity">
    <reaction evidence="1">
        <text>RNA(n) + a ribonucleoside 5'-triphosphate = RNA(n+1) + diphosphate</text>
        <dbReference type="Rhea" id="RHEA:21248"/>
        <dbReference type="Rhea" id="RHEA-COMP:14527"/>
        <dbReference type="Rhea" id="RHEA-COMP:17342"/>
        <dbReference type="ChEBI" id="CHEBI:33019"/>
        <dbReference type="ChEBI" id="CHEBI:61557"/>
        <dbReference type="ChEBI" id="CHEBI:140395"/>
        <dbReference type="EC" id="2.7.7.48"/>
    </reaction>
</comment>
<comment type="subunit">
    <text evidence="1">Influenza RNA polymerase is composed of three subunits: PB1, PB2 and PA. Interacts (via N-terminus) with PA (via C-terminus). Interacts (via C-terminus) with PB2 (via N-terminus); this interaction is essential for transcription initiation.</text>
</comment>
<comment type="subcellular location">
    <subcellularLocation>
        <location evidence="1">Host nucleus</location>
    </subcellularLocation>
    <subcellularLocation>
        <location evidence="1">Host cytoplasm</location>
    </subcellularLocation>
</comment>
<comment type="PTM">
    <text evidence="1">Phosphorylated by host PRKCA.</text>
</comment>
<comment type="similarity">
    <text evidence="1">Belongs to the influenza viruses polymerase PB1 family.</text>
</comment>
<keyword id="KW-0002">3D-structure</keyword>
<keyword id="KW-1262">Eukaryotic host gene expression shutoff by virus</keyword>
<keyword id="KW-1191">Eukaryotic host transcription shutoff by virus</keyword>
<keyword id="KW-1035">Host cytoplasm</keyword>
<keyword id="KW-1190">Host gene expression shutoff by virus</keyword>
<keyword id="KW-1048">Host nucleus</keyword>
<keyword id="KW-0945">Host-virus interaction</keyword>
<keyword id="KW-1104">Inhibition of host RNA polymerase II by virus</keyword>
<keyword id="KW-0547">Nucleotide-binding</keyword>
<keyword id="KW-0548">Nucleotidyltransferase</keyword>
<keyword id="KW-0597">Phosphoprotein</keyword>
<keyword id="KW-0696">RNA-directed RNA polymerase</keyword>
<keyword id="KW-0808">Transferase</keyword>
<keyword id="KW-0693">Viral RNA replication</keyword>
<keyword id="KW-1195">Viral transcription</keyword>
<protein>
    <recommendedName>
        <fullName evidence="1">RNA-directed RNA polymerase catalytic subunit</fullName>
        <ecNumber evidence="1">2.7.7.48</ecNumber>
    </recommendedName>
    <alternativeName>
        <fullName evidence="1">Polymerase basic protein 1</fullName>
        <shortName evidence="1">PB1</shortName>
    </alternativeName>
    <alternativeName>
        <fullName evidence="1">RNA-directed RNA polymerase subunit P1</fullName>
    </alternativeName>
</protein>
<gene>
    <name evidence="1" type="primary">PB1</name>
</gene>